<gene>
    <name evidence="5" type="primary">ompR</name>
    <name type="ordered locus">SL1344_3469</name>
</gene>
<reference key="1">
    <citation type="journal article" date="2012" name="Proc. Natl. Acad. Sci. U.S.A.">
        <title>The transcriptional landscape and small RNAs of Salmonella enterica serovar Typhimurium.</title>
        <authorList>
            <person name="Kroger C."/>
            <person name="Dillon S.C."/>
            <person name="Cameron A.D."/>
            <person name="Papenfort K."/>
            <person name="Sivasankaran S.K."/>
            <person name="Hokamp K."/>
            <person name="Chao Y."/>
            <person name="Sittka A."/>
            <person name="Hebrard M."/>
            <person name="Handler K."/>
            <person name="Colgan A."/>
            <person name="Leekitcharoenphon P."/>
            <person name="Langridge G.C."/>
            <person name="Lohan A.J."/>
            <person name="Loftus B."/>
            <person name="Lucchini S."/>
            <person name="Ussery D.W."/>
            <person name="Dorman C.J."/>
            <person name="Thomson N.R."/>
            <person name="Vogel J."/>
            <person name="Hinton J.C."/>
        </authorList>
    </citation>
    <scope>NUCLEOTIDE SEQUENCE [LARGE SCALE GENOMIC DNA]</scope>
    <source>
        <strain>SL1344</strain>
    </source>
</reference>
<reference key="2">
    <citation type="journal article" date="1989" name="Infect. Immun.">
        <title>Characterization of porin and ompR mutants of a virulent strain of Salmonella typhimurium: ompR mutants are attenuated in vivo.</title>
        <authorList>
            <person name="Dorman C.J."/>
            <person name="Chatfield S."/>
            <person name="Higgins C.F."/>
            <person name="Hayward C."/>
            <person name="Dougan G."/>
        </authorList>
    </citation>
    <scope>FUNCTION</scope>
    <scope>DISRUPTION PHENOTYPE</scope>
    <source>
        <strain>SL1344</strain>
    </source>
</reference>
<evidence type="ECO:0000250" key="1">
    <source>
        <dbReference type="UniProtKB" id="P0AA16"/>
    </source>
</evidence>
<evidence type="ECO:0000255" key="2">
    <source>
        <dbReference type="PROSITE-ProRule" id="PRU00169"/>
    </source>
</evidence>
<evidence type="ECO:0000255" key="3">
    <source>
        <dbReference type="PROSITE-ProRule" id="PRU01091"/>
    </source>
</evidence>
<evidence type="ECO:0000269" key="4">
    <source>
    </source>
</evidence>
<evidence type="ECO:0000303" key="5">
    <source>
    </source>
</evidence>
<evidence type="ECO:0000305" key="6"/>
<evidence type="ECO:0000305" key="7">
    <source>
    </source>
</evidence>
<protein>
    <recommendedName>
        <fullName evidence="6">DNA-binding dual transcriptional regulator OmpR</fullName>
    </recommendedName>
    <alternativeName>
        <fullName evidence="6">Transcriptional regulatory protein OmpR</fullName>
    </alternativeName>
</protein>
<dbReference type="EMBL" id="FQ312003">
    <property type="protein sequence ID" value="CBW19564.1"/>
    <property type="molecule type" value="Genomic_DNA"/>
</dbReference>
<dbReference type="RefSeq" id="WP_001157751.1">
    <property type="nucleotide sequence ID" value="NZ_QASL01000006.1"/>
</dbReference>
<dbReference type="SMR" id="A0A0H3NGY1"/>
<dbReference type="GeneID" id="98390506"/>
<dbReference type="KEGG" id="sey:SL1344_3469"/>
<dbReference type="PATRIC" id="fig|216597.6.peg.3863"/>
<dbReference type="HOGENOM" id="CLU_000445_30_4_6"/>
<dbReference type="BioCyc" id="SENT216597:SL1344_RS18070-MONOMER"/>
<dbReference type="Proteomes" id="UP000008962">
    <property type="component" value="Chromosome"/>
</dbReference>
<dbReference type="GO" id="GO:0005829">
    <property type="term" value="C:cytosol"/>
    <property type="evidence" value="ECO:0007669"/>
    <property type="project" value="TreeGrafter"/>
</dbReference>
<dbReference type="GO" id="GO:0032993">
    <property type="term" value="C:protein-DNA complex"/>
    <property type="evidence" value="ECO:0007669"/>
    <property type="project" value="TreeGrafter"/>
</dbReference>
<dbReference type="GO" id="GO:0000156">
    <property type="term" value="F:phosphorelay response regulator activity"/>
    <property type="evidence" value="ECO:0007669"/>
    <property type="project" value="TreeGrafter"/>
</dbReference>
<dbReference type="GO" id="GO:0000976">
    <property type="term" value="F:transcription cis-regulatory region binding"/>
    <property type="evidence" value="ECO:0007669"/>
    <property type="project" value="TreeGrafter"/>
</dbReference>
<dbReference type="GO" id="GO:0006355">
    <property type="term" value="P:regulation of DNA-templated transcription"/>
    <property type="evidence" value="ECO:0007669"/>
    <property type="project" value="InterPro"/>
</dbReference>
<dbReference type="CDD" id="cd00383">
    <property type="entry name" value="trans_reg_C"/>
    <property type="match status" value="1"/>
</dbReference>
<dbReference type="FunFam" id="1.10.10.10:FF:000023">
    <property type="entry name" value="Two-component response regulator OmpR"/>
    <property type="match status" value="1"/>
</dbReference>
<dbReference type="FunFam" id="3.40.50.2300:FF:000008">
    <property type="entry name" value="Two-component response regulator OmpR"/>
    <property type="match status" value="1"/>
</dbReference>
<dbReference type="Gene3D" id="3.40.50.2300">
    <property type="match status" value="1"/>
</dbReference>
<dbReference type="Gene3D" id="6.10.250.690">
    <property type="match status" value="1"/>
</dbReference>
<dbReference type="Gene3D" id="1.10.10.10">
    <property type="entry name" value="Winged helix-like DNA-binding domain superfamily/Winged helix DNA-binding domain"/>
    <property type="match status" value="1"/>
</dbReference>
<dbReference type="InterPro" id="IPR011006">
    <property type="entry name" value="CheY-like_superfamily"/>
</dbReference>
<dbReference type="InterPro" id="IPR001867">
    <property type="entry name" value="OmpR/PhoB-type_DNA-bd"/>
</dbReference>
<dbReference type="InterPro" id="IPR016032">
    <property type="entry name" value="Sig_transdc_resp-reg_C-effctor"/>
</dbReference>
<dbReference type="InterPro" id="IPR001789">
    <property type="entry name" value="Sig_transdc_resp-reg_receiver"/>
</dbReference>
<dbReference type="InterPro" id="IPR039420">
    <property type="entry name" value="WalR-like"/>
</dbReference>
<dbReference type="InterPro" id="IPR036388">
    <property type="entry name" value="WH-like_DNA-bd_sf"/>
</dbReference>
<dbReference type="NCBIfam" id="NF007005">
    <property type="entry name" value="PRK09468.1"/>
    <property type="match status" value="1"/>
</dbReference>
<dbReference type="PANTHER" id="PTHR48111:SF4">
    <property type="entry name" value="DNA-BINDING DUAL TRANSCRIPTIONAL REGULATOR OMPR"/>
    <property type="match status" value="1"/>
</dbReference>
<dbReference type="PANTHER" id="PTHR48111">
    <property type="entry name" value="REGULATOR OF RPOS"/>
    <property type="match status" value="1"/>
</dbReference>
<dbReference type="Pfam" id="PF00072">
    <property type="entry name" value="Response_reg"/>
    <property type="match status" value="1"/>
</dbReference>
<dbReference type="Pfam" id="PF00486">
    <property type="entry name" value="Trans_reg_C"/>
    <property type="match status" value="1"/>
</dbReference>
<dbReference type="SMART" id="SM00448">
    <property type="entry name" value="REC"/>
    <property type="match status" value="1"/>
</dbReference>
<dbReference type="SMART" id="SM00862">
    <property type="entry name" value="Trans_reg_C"/>
    <property type="match status" value="1"/>
</dbReference>
<dbReference type="SUPFAM" id="SSF46894">
    <property type="entry name" value="C-terminal effector domain of the bipartite response regulators"/>
    <property type="match status" value="1"/>
</dbReference>
<dbReference type="SUPFAM" id="SSF52172">
    <property type="entry name" value="CheY-like"/>
    <property type="match status" value="1"/>
</dbReference>
<dbReference type="PROSITE" id="PS51755">
    <property type="entry name" value="OMPR_PHOB"/>
    <property type="match status" value="1"/>
</dbReference>
<dbReference type="PROSITE" id="PS50110">
    <property type="entry name" value="RESPONSE_REGULATORY"/>
    <property type="match status" value="1"/>
</dbReference>
<organism>
    <name type="scientific">Salmonella typhimurium (strain SL1344)</name>
    <dbReference type="NCBI Taxonomy" id="216597"/>
    <lineage>
        <taxon>Bacteria</taxon>
        <taxon>Pseudomonadati</taxon>
        <taxon>Pseudomonadota</taxon>
        <taxon>Gammaproteobacteria</taxon>
        <taxon>Enterobacterales</taxon>
        <taxon>Enterobacteriaceae</taxon>
        <taxon>Salmonella</taxon>
    </lineage>
</organism>
<proteinExistence type="inferred from homology"/>
<sequence length="239" mass="27354">MQENYKILVVDDDMRLRALLERYLTEQGFQVRSVANAEQMDRLLTRESFHLMVLDLMLPGEDGLSICRRLRSQSNPMPIIMVTAKGEEVDRIVGLEIGADDYIPKPFNPRELLARIRAVLRRQANELPGAPSQEEAVIAFGKFKLNLGTREMFREDEPMPLTSGEFAVLKALVSHPREPLSRDKLMNLARGREYSAMERSIDVQISRLRRMVEEDPAHPRYIQTVWGLGYVFVPDGSKA</sequence>
<comment type="function">
    <text evidence="4 7">Member of the two-component regulatory system EnvZ/OmpR involved in osmoregulation (particularly of genes ompF and ompC) as well as other genes (PubMed:2543631). Plays a central role in both acid and osmotic stress responses. Binds to the promoter of both ompC and ompF; at low osmolarity it activates ompF transcription, while at high osmolarity it represses ompF and activates ompC transcription (Probable).</text>
</comment>
<comment type="subunit">
    <text evidence="1">Monomer and multimer.</text>
</comment>
<comment type="subcellular location">
    <subcellularLocation>
        <location evidence="1">Cytoplasm</location>
    </subcellularLocation>
</comment>
<comment type="PTM">
    <text evidence="1">Phosphorylated by EnvZ; this stimulates its DNA-binding ability. Asp-55 is the primary phosphate acceptor site.</text>
</comment>
<comment type="disruption phenotype">
    <text evidence="4">Decreased virulence in male BALB/c mice; mutant cells are able to colonize mouse tissues and persist for several weeks, but are about 10(5)-fold less lethal. The deletion is probably polar on downstream envZ.</text>
</comment>
<accession>A0A0H3NGY1</accession>
<feature type="chain" id="PRO_0000448906" description="DNA-binding dual transcriptional regulator OmpR">
    <location>
        <begin position="1"/>
        <end position="239"/>
    </location>
</feature>
<feature type="domain" description="Response regulatory" evidence="2">
    <location>
        <begin position="6"/>
        <end position="120"/>
    </location>
</feature>
<feature type="DNA-binding region" description="OmpR/PhoB-type" evidence="3">
    <location>
        <begin position="135"/>
        <end position="234"/>
    </location>
</feature>
<feature type="modified residue" description="4-aspartylphosphate" evidence="1 2">
    <location>
        <position position="55"/>
    </location>
</feature>
<keyword id="KW-0010">Activator</keyword>
<keyword id="KW-0963">Cytoplasm</keyword>
<keyword id="KW-0238">DNA-binding</keyword>
<keyword id="KW-0597">Phosphoprotein</keyword>
<keyword id="KW-0678">Repressor</keyword>
<keyword id="KW-0346">Stress response</keyword>
<keyword id="KW-0804">Transcription</keyword>
<keyword id="KW-0805">Transcription regulation</keyword>
<keyword id="KW-0902">Two-component regulatory system</keyword>
<keyword id="KW-0843">Virulence</keyword>
<name>OMPR_SALTS</name>